<reference key="1">
    <citation type="journal article" date="2006" name="J. Biol. Chem.">
        <title>Cloning and characterization of mouse lung-type acyl-CoA:lysophosphatidylcholine acyltransferase 1 (LPCAT1): expression in alveolar type II cells and possible involvement in surfactant production.</title>
        <authorList>
            <person name="Nakanishi H."/>
            <person name="Shindou H."/>
            <person name="Hishikawa D."/>
            <person name="Harayama T."/>
            <person name="Ogasawara R."/>
            <person name="Suwabe A."/>
            <person name="Taguchi R."/>
            <person name="Shimizu T."/>
        </authorList>
    </citation>
    <scope>NUCLEOTIDE SEQUENCE [MRNA]</scope>
</reference>
<reference key="2">
    <citation type="journal article" date="2003" name="DNA Res.">
        <title>Characterization of long cDNA clones from human adult spleen. II. The complete sequences of 81 cDNA clones.</title>
        <authorList>
            <person name="Jikuya H."/>
            <person name="Takano J."/>
            <person name="Kikuno R."/>
            <person name="Hirosawa M."/>
            <person name="Nagase T."/>
            <person name="Nomura N."/>
            <person name="Ohara O."/>
        </authorList>
    </citation>
    <scope>NUCLEOTIDE SEQUENCE [LARGE SCALE MRNA] OF 136-534</scope>
    <source>
        <tissue>Spleen</tissue>
    </source>
</reference>
<reference key="3">
    <citation type="journal article" date="2004" name="Genome Res.">
        <title>The status, quality, and expansion of the NIH full-length cDNA project: the Mammalian Gene Collection (MGC).</title>
        <authorList>
            <consortium name="The MGC Project Team"/>
        </authorList>
    </citation>
    <scope>NUCLEOTIDE SEQUENCE [LARGE SCALE MRNA] OF 140-534</scope>
    <source>
        <tissue>Eye</tissue>
    </source>
</reference>
<reference key="4">
    <citation type="journal article" date="2004" name="Nat. Genet.">
        <title>Complete sequencing and characterization of 21,243 full-length human cDNAs.</title>
        <authorList>
            <person name="Ota T."/>
            <person name="Suzuki Y."/>
            <person name="Nishikawa T."/>
            <person name="Otsuki T."/>
            <person name="Sugiyama T."/>
            <person name="Irie R."/>
            <person name="Wakamatsu A."/>
            <person name="Hayashi K."/>
            <person name="Sato H."/>
            <person name="Nagai K."/>
            <person name="Kimura K."/>
            <person name="Makita H."/>
            <person name="Sekine M."/>
            <person name="Obayashi M."/>
            <person name="Nishi T."/>
            <person name="Shibahara T."/>
            <person name="Tanaka T."/>
            <person name="Ishii S."/>
            <person name="Yamamoto J."/>
            <person name="Saito K."/>
            <person name="Kawai Y."/>
            <person name="Isono Y."/>
            <person name="Nakamura Y."/>
            <person name="Nagahari K."/>
            <person name="Murakami K."/>
            <person name="Yasuda T."/>
            <person name="Iwayanagi T."/>
            <person name="Wagatsuma M."/>
            <person name="Shiratori A."/>
            <person name="Sudo H."/>
            <person name="Hosoiri T."/>
            <person name="Kaku Y."/>
            <person name="Kodaira H."/>
            <person name="Kondo H."/>
            <person name="Sugawara M."/>
            <person name="Takahashi M."/>
            <person name="Kanda K."/>
            <person name="Yokoi T."/>
            <person name="Furuya T."/>
            <person name="Kikkawa E."/>
            <person name="Omura Y."/>
            <person name="Abe K."/>
            <person name="Kamihara K."/>
            <person name="Katsuta N."/>
            <person name="Sato K."/>
            <person name="Tanikawa M."/>
            <person name="Yamazaki M."/>
            <person name="Ninomiya K."/>
            <person name="Ishibashi T."/>
            <person name="Yamashita H."/>
            <person name="Murakawa K."/>
            <person name="Fujimori K."/>
            <person name="Tanai H."/>
            <person name="Kimata M."/>
            <person name="Watanabe M."/>
            <person name="Hiraoka S."/>
            <person name="Chiba Y."/>
            <person name="Ishida S."/>
            <person name="Ono Y."/>
            <person name="Takiguchi S."/>
            <person name="Watanabe S."/>
            <person name="Yosida M."/>
            <person name="Hotuta T."/>
            <person name="Kusano J."/>
            <person name="Kanehori K."/>
            <person name="Takahashi-Fujii A."/>
            <person name="Hara H."/>
            <person name="Tanase T.-O."/>
            <person name="Nomura Y."/>
            <person name="Togiya S."/>
            <person name="Komai F."/>
            <person name="Hara R."/>
            <person name="Takeuchi K."/>
            <person name="Arita M."/>
            <person name="Imose N."/>
            <person name="Musashino K."/>
            <person name="Yuuki H."/>
            <person name="Oshima A."/>
            <person name="Sasaki N."/>
            <person name="Aotsuka S."/>
            <person name="Yoshikawa Y."/>
            <person name="Matsunawa H."/>
            <person name="Ichihara T."/>
            <person name="Shiohata N."/>
            <person name="Sano S."/>
            <person name="Moriya S."/>
            <person name="Momiyama H."/>
            <person name="Satoh N."/>
            <person name="Takami S."/>
            <person name="Terashima Y."/>
            <person name="Suzuki O."/>
            <person name="Nakagawa S."/>
            <person name="Senoh A."/>
            <person name="Mizoguchi H."/>
            <person name="Goto Y."/>
            <person name="Shimizu F."/>
            <person name="Wakebe H."/>
            <person name="Hishigaki H."/>
            <person name="Watanabe T."/>
            <person name="Sugiyama A."/>
            <person name="Takemoto M."/>
            <person name="Kawakami B."/>
            <person name="Yamazaki M."/>
            <person name="Watanabe K."/>
            <person name="Kumagai A."/>
            <person name="Itakura S."/>
            <person name="Fukuzumi Y."/>
            <person name="Fujimori Y."/>
            <person name="Komiyama M."/>
            <person name="Tashiro H."/>
            <person name="Tanigami A."/>
            <person name="Fujiwara T."/>
            <person name="Ono T."/>
            <person name="Yamada K."/>
            <person name="Fujii Y."/>
            <person name="Ozaki K."/>
            <person name="Hirao M."/>
            <person name="Ohmori Y."/>
            <person name="Kawabata A."/>
            <person name="Hikiji T."/>
            <person name="Kobatake N."/>
            <person name="Inagaki H."/>
            <person name="Ikema Y."/>
            <person name="Okamoto S."/>
            <person name="Okitani R."/>
            <person name="Kawakami T."/>
            <person name="Noguchi S."/>
            <person name="Itoh T."/>
            <person name="Shigeta K."/>
            <person name="Senba T."/>
            <person name="Matsumura K."/>
            <person name="Nakajima Y."/>
            <person name="Mizuno T."/>
            <person name="Morinaga M."/>
            <person name="Sasaki M."/>
            <person name="Togashi T."/>
            <person name="Oyama M."/>
            <person name="Hata H."/>
            <person name="Watanabe M."/>
            <person name="Komatsu T."/>
            <person name="Mizushima-Sugano J."/>
            <person name="Satoh T."/>
            <person name="Shirai Y."/>
            <person name="Takahashi Y."/>
            <person name="Nakagawa K."/>
            <person name="Okumura K."/>
            <person name="Nagase T."/>
            <person name="Nomura N."/>
            <person name="Kikuchi H."/>
            <person name="Masuho Y."/>
            <person name="Yamashita R."/>
            <person name="Nakai K."/>
            <person name="Yada T."/>
            <person name="Nakamura Y."/>
            <person name="Ohara O."/>
            <person name="Isogai T."/>
            <person name="Sugano S."/>
        </authorList>
    </citation>
    <scope>NUCLEOTIDE SEQUENCE [LARGE SCALE MRNA] OF 236-534</scope>
    <source>
        <tissue>Teratocarcinoma</tissue>
    </source>
</reference>
<reference key="5">
    <citation type="submission" date="2002-07" db="EMBL/GenBank/DDBJ databases">
        <title>Screening and cloning of a new immuno-associated gene regulated by phosphonoformate.</title>
        <authorList>
            <person name="Liu Y."/>
            <person name="Cheng J."/>
            <person name="Lu Y."/>
        </authorList>
    </citation>
    <scope>NUCLEOTIDE SEQUENCE [MRNA] OF 298-534</scope>
</reference>
<reference key="6">
    <citation type="journal article" date="2007" name="BMC Genomics">
        <title>The full-ORF clone resource of the German cDNA consortium.</title>
        <authorList>
            <person name="Bechtel S."/>
            <person name="Rosenfelder H."/>
            <person name="Duda A."/>
            <person name="Schmidt C.P."/>
            <person name="Ernst U."/>
            <person name="Wellenreuther R."/>
            <person name="Mehrle A."/>
            <person name="Schuster C."/>
            <person name="Bahr A."/>
            <person name="Bloecker H."/>
            <person name="Heubner D."/>
            <person name="Hoerlein A."/>
            <person name="Michel G."/>
            <person name="Wedler H."/>
            <person name="Koehrer K."/>
            <person name="Ottenwaelder B."/>
            <person name="Poustka A."/>
            <person name="Wiemann S."/>
            <person name="Schupp I."/>
        </authorList>
    </citation>
    <scope>NUCLEOTIDE SEQUENCE [LARGE SCALE MRNA] OF 448-534</scope>
    <source>
        <tissue>Amygdala</tissue>
    </source>
</reference>
<reference key="7">
    <citation type="journal article" date="2006" name="Proc. Natl. Acad. Sci. U.S.A.">
        <title>Identification and characterization of a lysophosphatidylcholine acyltransferase in alveolar type II cells.</title>
        <authorList>
            <person name="Chen X."/>
            <person name="Hyatt B.A."/>
            <person name="Mucenski M.L."/>
            <person name="Mason R.J."/>
            <person name="Shannon J.M."/>
        </authorList>
    </citation>
    <scope>IDENTIFICATION</scope>
</reference>
<reference key="8">
    <citation type="journal article" date="2008" name="Proc. Natl. Acad. Sci. U.S.A.">
        <title>Mammalian acyl-CoA:lysophosphatidylcholine acyltransferase enzymes.</title>
        <authorList>
            <person name="Soupene E."/>
            <person name="Fyrst H."/>
            <person name="Kuypers F.A."/>
        </authorList>
    </citation>
    <scope>FUNCTION</scope>
    <scope>CATALYTIC ACTIVITY</scope>
    <scope>BIOPHYSICOCHEMICAL PROPERTIES</scope>
    <scope>TISSUE SPECIFICITY</scope>
</reference>
<reference key="9">
    <citation type="journal article" date="2011" name="BMC Syst. Biol.">
        <title>Initial characterization of the human central proteome.</title>
        <authorList>
            <person name="Burkard T.R."/>
            <person name="Planyavsky M."/>
            <person name="Kaupe I."/>
            <person name="Breitwieser F.P."/>
            <person name="Buerckstuemmer T."/>
            <person name="Bennett K.L."/>
            <person name="Superti-Furga G."/>
            <person name="Colinge J."/>
        </authorList>
    </citation>
    <scope>IDENTIFICATION BY MASS SPECTROMETRY [LARGE SCALE ANALYSIS]</scope>
</reference>
<reference key="10">
    <citation type="journal article" date="2011" name="J. Biol. Chem.">
        <title>Human lysophosphatidylcholine acyltransferases 1 and 2 are located in lipid droplets where they catalyze the formation of phosphatidylcholine.</title>
        <authorList>
            <person name="Moessinger C."/>
            <person name="Kuerschner L."/>
            <person name="Spandl J."/>
            <person name="Shevchenko A."/>
            <person name="Thiele C."/>
        </authorList>
    </citation>
    <scope>FUNCTION</scope>
    <scope>CATALYTIC ACTIVITY</scope>
    <scope>PATHWAY</scope>
    <scope>SUBCELLULAR LOCATION</scope>
    <scope>TOPOLOGY</scope>
    <scope>DI-LYSINE MOTIF</scope>
</reference>
<reference key="11">
    <citation type="journal article" date="2014" name="BMC Cell Biol.">
        <title>Two different pathways of phosphatidylcholine synthesis, the Kennedy Pathway and the Lands Cycle, differentially regulate cellular triacylglycerol storage.</title>
        <authorList>
            <person name="Moessinger C."/>
            <person name="Klizaite K."/>
            <person name="Steinhagen A."/>
            <person name="Philippou-Massier J."/>
            <person name="Shevchenko A."/>
            <person name="Hoch M."/>
            <person name="Ejsing C.S."/>
            <person name="Thiele C."/>
        </authorList>
    </citation>
    <scope>FUNCTION</scope>
</reference>
<reference key="12">
    <citation type="journal article" date="2015" name="Proteomics">
        <title>N-terminome analysis of the human mitochondrial proteome.</title>
        <authorList>
            <person name="Vaca Jacome A.S."/>
            <person name="Rabilloud T."/>
            <person name="Schaeffer-Reiss C."/>
            <person name="Rompais M."/>
            <person name="Ayoub D."/>
            <person name="Lane L."/>
            <person name="Bairoch A."/>
            <person name="Van Dorsselaer A."/>
            <person name="Carapito C."/>
        </authorList>
    </citation>
    <scope>IDENTIFICATION BY MASS SPECTROMETRY [LARGE SCALE ANALYSIS]</scope>
</reference>
<accession>Q8NF37</accession>
<accession>Q1HAQ1</accession>
<accession>Q7Z4G6</accession>
<accession>Q8N3U7</accession>
<accession>Q8WUL8</accession>
<accession>Q9GZW6</accession>
<comment type="function">
    <text evidence="2 6 7 8">Exhibits acyltransferase activity (PubMed:18156367, PubMed:21498505). Exhibits acetyltransferase activity (By similarity). Activity is calcium-independent (By similarity). Catalyzes the conversion of lysophosphatidylcholine (1-acyl-sn-glycero-3-phosphocholine or LPC) into phosphatidylcholine (1,2-diacyl-sn-glycero-3-phosphocholine or PC) (PubMed:18156367, PubMed:21498505). Catalyzes the conversion 1-acyl-sn-glycerol-3-phosphate (lysophosphatidic acid or LPA) into 1,2-diacyl-sn-glycerol-3-phosphate (phosphatidic acid or PA) by incorporating an acyl moiety at the sn-2 position of the glycerol backbone (By similarity). Displays a clear preference for saturated fatty acyl-CoAs, and 1-myristoyl or 1-palmitoyl LPC as acyl donors and acceptors, respectively (By similarity). Involved in platelet-activating factor (PAF) biosynthesis by catalyzing the conversion of the PAF precursor, 1-O-alkyl-sn-glycero-3-phosphocholine (lyso-PAF) into 1-O-alkyl-2-acetyl-sn-glycero-3-phosphocholine (PAF) (By similarity). May synthesize phosphatidylcholine in pulmonary surfactant, thereby playing a pivotal role in respiratory physiology (By similarity). Involved in the regulation of lipid droplet number and size (PubMed:25491198).</text>
</comment>
<comment type="catalytic activity">
    <reaction evidence="6 7">
        <text>a 1-acyl-sn-glycero-3-phosphocholine + an acyl-CoA = a 1,2-diacyl-sn-glycero-3-phosphocholine + CoA</text>
        <dbReference type="Rhea" id="RHEA:12937"/>
        <dbReference type="ChEBI" id="CHEBI:57287"/>
        <dbReference type="ChEBI" id="CHEBI:57643"/>
        <dbReference type="ChEBI" id="CHEBI:58168"/>
        <dbReference type="ChEBI" id="CHEBI:58342"/>
        <dbReference type="EC" id="2.3.1.23"/>
    </reaction>
</comment>
<comment type="catalytic activity">
    <reaction evidence="1">
        <text>a 1-acyl-sn-glycero-3-phosphate + an acyl-CoA = a 1,2-diacyl-sn-glycero-3-phosphate + CoA</text>
        <dbReference type="Rhea" id="RHEA:19709"/>
        <dbReference type="ChEBI" id="CHEBI:57287"/>
        <dbReference type="ChEBI" id="CHEBI:57970"/>
        <dbReference type="ChEBI" id="CHEBI:58342"/>
        <dbReference type="ChEBI" id="CHEBI:58608"/>
        <dbReference type="EC" id="2.3.1.51"/>
    </reaction>
</comment>
<comment type="catalytic activity">
    <reaction evidence="2">
        <text>a 1-O-alkyl-sn-glycero-3-phosphocholine + acetyl-CoA = a 1-O-alkyl-2-acetyl-sn-glycero-3-phosphocholine + CoA</text>
        <dbReference type="Rhea" id="RHEA:18461"/>
        <dbReference type="ChEBI" id="CHEBI:30909"/>
        <dbReference type="ChEBI" id="CHEBI:36707"/>
        <dbReference type="ChEBI" id="CHEBI:57287"/>
        <dbReference type="ChEBI" id="CHEBI:57288"/>
        <dbReference type="EC" id="2.3.1.67"/>
    </reaction>
</comment>
<comment type="catalytic activity">
    <reaction evidence="2">
        <text>a 1-O-(1Z-alkenyl)-sn-glycero-3-phosphocholine + an acyl-CoA = a 1-O-(1Z-alkenyl)-2-acyl-sn-glycero-3-phosphocholine + CoA</text>
        <dbReference type="Rhea" id="RHEA:10344"/>
        <dbReference type="ChEBI" id="CHEBI:57287"/>
        <dbReference type="ChEBI" id="CHEBI:58342"/>
        <dbReference type="ChEBI" id="CHEBI:77286"/>
        <dbReference type="ChEBI" id="CHEBI:77287"/>
        <dbReference type="EC" id="2.3.1.25"/>
    </reaction>
</comment>
<comment type="catalytic activity">
    <reaction evidence="1">
        <text>1-acyl-sn-glycero-3-phospho-(1'-sn-glycerol) + an acyl-CoA = a 1,2-diacyl-sn-glycero-3-phospho-(1'-sn-glycerol) + CoA</text>
        <dbReference type="Rhea" id="RHEA:33203"/>
        <dbReference type="ChEBI" id="CHEBI:57287"/>
        <dbReference type="ChEBI" id="CHEBI:58342"/>
        <dbReference type="ChEBI" id="CHEBI:64716"/>
        <dbReference type="ChEBI" id="CHEBI:64840"/>
    </reaction>
    <physiologicalReaction direction="left-to-right" evidence="1">
        <dbReference type="Rhea" id="RHEA:33204"/>
    </physiologicalReaction>
</comment>
<comment type="catalytic activity">
    <reaction evidence="7">
        <text>1-hexadecanoyl-sn-glycero-3-phosphocholine + (9Z)-octadecenoyl-CoA = 1-hexadecanoyl-2-(9Z-octadecenoyl)-sn-glycero-3-phosphocholine + CoA</text>
        <dbReference type="Rhea" id="RHEA:35991"/>
        <dbReference type="ChEBI" id="CHEBI:57287"/>
        <dbReference type="ChEBI" id="CHEBI:57387"/>
        <dbReference type="ChEBI" id="CHEBI:72998"/>
        <dbReference type="ChEBI" id="CHEBI:73001"/>
    </reaction>
    <physiologicalReaction direction="left-to-right" evidence="11">
        <dbReference type="Rhea" id="RHEA:35992"/>
    </physiologicalReaction>
</comment>
<comment type="catalytic activity">
    <reaction evidence="2">
        <text>1-hexadecanoyl-sn-glycero-3-phosphocholine + hexadecanoyl-CoA = 1,2-dihexadecanoyl-sn-glycero-3-phosphocholine + CoA</text>
        <dbReference type="Rhea" id="RHEA:35983"/>
        <dbReference type="ChEBI" id="CHEBI:57287"/>
        <dbReference type="ChEBI" id="CHEBI:57379"/>
        <dbReference type="ChEBI" id="CHEBI:72998"/>
        <dbReference type="ChEBI" id="CHEBI:72999"/>
    </reaction>
    <physiologicalReaction direction="left-to-right" evidence="2">
        <dbReference type="Rhea" id="RHEA:35984"/>
    </physiologicalReaction>
</comment>
<comment type="catalytic activity">
    <reaction evidence="2">
        <text>1-O-hexadecyl-sn-glycero-3-phosphocholine + hexadecanoyl-CoA = 1-O-hexadecyl-2-hexadecanoyl-sn-glycero-3-phosphocholine + CoA</text>
        <dbReference type="Rhea" id="RHEA:37811"/>
        <dbReference type="ChEBI" id="CHEBI:57287"/>
        <dbReference type="ChEBI" id="CHEBI:57379"/>
        <dbReference type="ChEBI" id="CHEBI:64496"/>
        <dbReference type="ChEBI" id="CHEBI:72744"/>
    </reaction>
    <physiologicalReaction direction="left-to-right" evidence="2">
        <dbReference type="Rhea" id="RHEA:37812"/>
    </physiologicalReaction>
</comment>
<comment type="catalytic activity">
    <reaction evidence="2">
        <text>a 1-O-(1Z-alkenyl)-sn-glycero-3-phosphocholine + hexadecanoyl-CoA = 1-O-(1Z)-alkenyl-2-hexadecanoyl-sn-glycero-3-phosphocholine + CoA</text>
        <dbReference type="Rhea" id="RHEA:37819"/>
        <dbReference type="ChEBI" id="CHEBI:57287"/>
        <dbReference type="ChEBI" id="CHEBI:57379"/>
        <dbReference type="ChEBI" id="CHEBI:77287"/>
        <dbReference type="ChEBI" id="CHEBI:77304"/>
    </reaction>
    <physiologicalReaction direction="left-to-right" evidence="2">
        <dbReference type="Rhea" id="RHEA:37820"/>
    </physiologicalReaction>
</comment>
<comment type="catalytic activity">
    <reaction evidence="2">
        <text>1-hexadecanoyl-sn-glycero-3-phospho-(1'-sn-glycerol) + hexadecanoyl-CoA = 1,2-dihexadecanoyl-sn-glycero-3-phospho-(1'-sn-glycerol) + CoA</text>
        <dbReference type="Rhea" id="RHEA:35851"/>
        <dbReference type="ChEBI" id="CHEBI:57287"/>
        <dbReference type="ChEBI" id="CHEBI:57379"/>
        <dbReference type="ChEBI" id="CHEBI:72829"/>
        <dbReference type="ChEBI" id="CHEBI:75158"/>
    </reaction>
    <physiologicalReaction direction="left-to-right" evidence="2">
        <dbReference type="Rhea" id="RHEA:35852"/>
    </physiologicalReaction>
</comment>
<comment type="catalytic activity">
    <reaction evidence="2">
        <text>1-dodecanoyl-sn-glycero-3-phosphocholine + hexadecanoyl-CoA = 1-dodecanoyl-2-hexadecanoyl-sn-glycero-3-phosphocholine + CoA</text>
        <dbReference type="Rhea" id="RHEA:37511"/>
        <dbReference type="ChEBI" id="CHEBI:57287"/>
        <dbReference type="ChEBI" id="CHEBI:57379"/>
        <dbReference type="ChEBI" id="CHEBI:74966"/>
        <dbReference type="ChEBI" id="CHEBI:75017"/>
    </reaction>
    <physiologicalReaction direction="left-to-right" evidence="2">
        <dbReference type="Rhea" id="RHEA:37512"/>
    </physiologicalReaction>
</comment>
<comment type="catalytic activity">
    <reaction evidence="2">
        <text>1-tetradecanoyl-sn-glycero-3-phosphocholine + hexadecanoyl-CoA = 1-tetradecanoyl-2-hexadecanoyl-sn-glycero-3-phosphocholine + CoA</text>
        <dbReference type="Rhea" id="RHEA:37655"/>
        <dbReference type="ChEBI" id="CHEBI:57287"/>
        <dbReference type="ChEBI" id="CHEBI:57379"/>
        <dbReference type="ChEBI" id="CHEBI:64489"/>
        <dbReference type="ChEBI" id="CHEBI:75062"/>
    </reaction>
    <physiologicalReaction direction="left-to-right" evidence="2">
        <dbReference type="Rhea" id="RHEA:37656"/>
    </physiologicalReaction>
</comment>
<comment type="catalytic activity">
    <reaction evidence="2">
        <text>1-O-octadecyl-sn-glycero-3-phosphocholine + hexadecanoyl-CoA = 1-O-octadecyl-2-hexadecanoyl-sn-glycero-3-phosphocholine + CoA</text>
        <dbReference type="Rhea" id="RHEA:37839"/>
        <dbReference type="ChEBI" id="CHEBI:57287"/>
        <dbReference type="ChEBI" id="CHEBI:57379"/>
        <dbReference type="ChEBI" id="CHEBI:75216"/>
        <dbReference type="ChEBI" id="CHEBI:75290"/>
    </reaction>
    <physiologicalReaction direction="left-to-right" evidence="2">
        <dbReference type="Rhea" id="RHEA:37840"/>
    </physiologicalReaction>
</comment>
<comment type="catalytic activity">
    <reaction evidence="2">
        <text>1-octadecanoyl-sn-glycero-3-phosphocholine + hexadecanoyl-CoA = 1-octadecanoyl-2-hexadecanoyl-sn-glycero-3-phosphocholine + CoA</text>
        <dbReference type="Rhea" id="RHEA:37527"/>
        <dbReference type="ChEBI" id="CHEBI:57287"/>
        <dbReference type="ChEBI" id="CHEBI:57379"/>
        <dbReference type="ChEBI" id="CHEBI:73858"/>
        <dbReference type="ChEBI" id="CHEBI:75026"/>
    </reaction>
    <physiologicalReaction direction="left-to-right" evidence="2">
        <dbReference type="Rhea" id="RHEA:37528"/>
    </physiologicalReaction>
</comment>
<comment type="catalytic activity">
    <reaction evidence="2">
        <text>1-(9Z-octadecenoyl)-sn-glycero-3-phosphocholine + hexadecanoyl-CoA = 1-(9Z-octadecenoyl)-2-hexadecanoyl-sn-glycero-3-phosphocholine + CoA</text>
        <dbReference type="Rhea" id="RHEA:37383"/>
        <dbReference type="ChEBI" id="CHEBI:28610"/>
        <dbReference type="ChEBI" id="CHEBI:57287"/>
        <dbReference type="ChEBI" id="CHEBI:57379"/>
        <dbReference type="ChEBI" id="CHEBI:74667"/>
    </reaction>
    <physiologicalReaction direction="left-to-right" evidence="2">
        <dbReference type="Rhea" id="RHEA:37384"/>
    </physiologicalReaction>
</comment>
<comment type="catalytic activity">
    <reaction evidence="2">
        <text>1-eicosanoyl-sn-glycero-3-phosphocholine + hexadecanoyl-CoA = 1-eicosanoyl-2-hexadecanoyl-sn-glycero-3-phosphocholine + CoA</text>
        <dbReference type="Rhea" id="RHEA:37843"/>
        <dbReference type="ChEBI" id="CHEBI:57287"/>
        <dbReference type="ChEBI" id="CHEBI:57379"/>
        <dbReference type="ChEBI" id="CHEBI:74968"/>
        <dbReference type="ChEBI" id="CHEBI:75294"/>
    </reaction>
    <physiologicalReaction direction="left-to-right" evidence="2">
        <dbReference type="Rhea" id="RHEA:37844"/>
    </physiologicalReaction>
</comment>
<comment type="catalytic activity">
    <reaction evidence="2">
        <text>hexanoyl-CoA + 1-hexadecanoyl-sn-glycero-3-phosphocholine = 1-hexadecanoyl-2-hexanoyl-sn-glycero-3-phosphocholine + CoA</text>
        <dbReference type="Rhea" id="RHEA:37855"/>
        <dbReference type="ChEBI" id="CHEBI:57287"/>
        <dbReference type="ChEBI" id="CHEBI:62620"/>
        <dbReference type="ChEBI" id="CHEBI:72998"/>
        <dbReference type="ChEBI" id="CHEBI:75301"/>
    </reaction>
    <physiologicalReaction direction="left-to-right" evidence="2">
        <dbReference type="Rhea" id="RHEA:37856"/>
    </physiologicalReaction>
</comment>
<comment type="catalytic activity">
    <reaction evidence="2">
        <text>octanoyl-CoA + 1-hexadecanoyl-sn-glycero-3-phosphocholine = 1-hexadecanoyl-2-octanoyl-sn-glycero-3-phosphocholine + CoA</text>
        <dbReference type="Rhea" id="RHEA:37859"/>
        <dbReference type="ChEBI" id="CHEBI:57287"/>
        <dbReference type="ChEBI" id="CHEBI:57386"/>
        <dbReference type="ChEBI" id="CHEBI:72998"/>
        <dbReference type="ChEBI" id="CHEBI:75302"/>
    </reaction>
    <physiologicalReaction direction="left-to-right" evidence="2">
        <dbReference type="Rhea" id="RHEA:37860"/>
    </physiologicalReaction>
</comment>
<comment type="catalytic activity">
    <reaction evidence="2">
        <text>decanoyl-CoA + 1-hexadecanoyl-sn-glycero-3-phosphocholine = 1-hexadecanoyl-2-decanoyl-sn-glycero-3-phosphocholine + CoA</text>
        <dbReference type="Rhea" id="RHEA:37863"/>
        <dbReference type="ChEBI" id="CHEBI:57287"/>
        <dbReference type="ChEBI" id="CHEBI:61430"/>
        <dbReference type="ChEBI" id="CHEBI:72998"/>
        <dbReference type="ChEBI" id="CHEBI:75300"/>
    </reaction>
    <physiologicalReaction direction="left-to-right" evidence="2">
        <dbReference type="Rhea" id="RHEA:37864"/>
    </physiologicalReaction>
</comment>
<comment type="catalytic activity">
    <reaction evidence="2">
        <text>dodecanoyl-CoA + 1-hexadecanoyl-sn-glycero-3-phosphocholine = 1-hexadecanoyl-2-dodecanoyl-sn-glycero-3-phosphocholine + CoA</text>
        <dbReference type="Rhea" id="RHEA:37515"/>
        <dbReference type="ChEBI" id="CHEBI:57287"/>
        <dbReference type="ChEBI" id="CHEBI:57375"/>
        <dbReference type="ChEBI" id="CHEBI:72998"/>
        <dbReference type="ChEBI" id="CHEBI:75018"/>
    </reaction>
    <physiologicalReaction direction="left-to-right" evidence="2">
        <dbReference type="Rhea" id="RHEA:37516"/>
    </physiologicalReaction>
</comment>
<comment type="catalytic activity">
    <reaction evidence="2">
        <text>tetradecanoyl-CoA + 1-hexadecanoyl-sn-glycero-3-phosphocholine = 1-hexadecanoyl-2-tetradecanoyl-sn-glycero-3-phosphocholine + CoA</text>
        <dbReference type="Rhea" id="RHEA:37867"/>
        <dbReference type="ChEBI" id="CHEBI:57287"/>
        <dbReference type="ChEBI" id="CHEBI:57385"/>
        <dbReference type="ChEBI" id="CHEBI:72998"/>
        <dbReference type="ChEBI" id="CHEBI:75304"/>
    </reaction>
    <physiologicalReaction direction="left-to-right" evidence="2">
        <dbReference type="Rhea" id="RHEA:37868"/>
    </physiologicalReaction>
</comment>
<comment type="catalytic activity">
    <reaction evidence="2">
        <text>(9Z,12Z)-octadecadienoyl-CoA + 1-hexadecanoyl-sn-glycero-3-phosphocholine = 1-hexadecanoyl-2-(9Z,12Z-octadecadienoyl)-sn-glycero-3-phosphocholine + CoA</text>
        <dbReference type="Rhea" id="RHEA:35995"/>
        <dbReference type="ChEBI" id="CHEBI:57287"/>
        <dbReference type="ChEBI" id="CHEBI:57383"/>
        <dbReference type="ChEBI" id="CHEBI:72998"/>
        <dbReference type="ChEBI" id="CHEBI:73002"/>
    </reaction>
    <physiologicalReaction direction="left-to-right" evidence="2">
        <dbReference type="Rhea" id="RHEA:35996"/>
    </physiologicalReaction>
</comment>
<comment type="catalytic activity">
    <reaction evidence="2">
        <text>(4Z,7Z,10Z,13Z,16Z,19Z)-docosahexaenoyl-CoA + 1-hexadecanoyl-sn-glycero-3-phosphocholine = 1-hexadecanoyl-2-(4Z,7Z,10Z,13Z,16Z,19Z-docosahexaenoyl)-sn-glycero-3-phosphocholine + CoA</text>
        <dbReference type="Rhea" id="RHEA:37475"/>
        <dbReference type="ChEBI" id="CHEBI:57287"/>
        <dbReference type="ChEBI" id="CHEBI:72998"/>
        <dbReference type="ChEBI" id="CHEBI:74298"/>
        <dbReference type="ChEBI" id="CHEBI:74963"/>
    </reaction>
    <physiologicalReaction direction="left-to-right" evidence="2">
        <dbReference type="Rhea" id="RHEA:37476"/>
    </physiologicalReaction>
</comment>
<comment type="catalytic activity">
    <reaction evidence="2">
        <text>1-hexadecanoyl-sn-glycero-3-phosphocholine + acetyl-CoA = 1-hexadecanoyl-2-acetyl-sn-glycero-3-phosphocholine + CoA</text>
        <dbReference type="Rhea" id="RHEA:37703"/>
        <dbReference type="ChEBI" id="CHEBI:57287"/>
        <dbReference type="ChEBI" id="CHEBI:57288"/>
        <dbReference type="ChEBI" id="CHEBI:72998"/>
        <dbReference type="ChEBI" id="CHEBI:75219"/>
    </reaction>
    <physiologicalReaction direction="left-to-right" evidence="2">
        <dbReference type="Rhea" id="RHEA:37704"/>
    </physiologicalReaction>
</comment>
<comment type="catalytic activity">
    <reaction evidence="2">
        <text>eicosanoyl-CoA + 1-hexadecanoyl-sn-glycero-3-phosphocholine = 1-hexadecanoyl-2-eicosanoyl-sn-glycero-3-phosphocholine + CoA</text>
        <dbReference type="Rhea" id="RHEA:43264"/>
        <dbReference type="ChEBI" id="CHEBI:57287"/>
        <dbReference type="ChEBI" id="CHEBI:57380"/>
        <dbReference type="ChEBI" id="CHEBI:72998"/>
        <dbReference type="ChEBI" id="CHEBI:82943"/>
    </reaction>
    <physiologicalReaction direction="left-to-right" evidence="2">
        <dbReference type="Rhea" id="RHEA:43265"/>
    </physiologicalReaction>
</comment>
<comment type="catalytic activity">
    <reaction evidence="2">
        <text>1-O-hexadecyl-sn-glycero-3-phosphocholine + acetyl-CoA = 1-O-hexadecyl-2-acetyl-sn-glycero-3-phosphocholine + CoA</text>
        <dbReference type="Rhea" id="RHEA:37719"/>
        <dbReference type="ChEBI" id="CHEBI:44811"/>
        <dbReference type="ChEBI" id="CHEBI:57287"/>
        <dbReference type="ChEBI" id="CHEBI:57288"/>
        <dbReference type="ChEBI" id="CHEBI:64496"/>
    </reaction>
    <physiologicalReaction direction="left-to-right" evidence="2">
        <dbReference type="Rhea" id="RHEA:37720"/>
    </physiologicalReaction>
</comment>
<comment type="catalytic activity">
    <reaction evidence="1">
        <text>a 1-acyl-sn-glycero-3-phosphocholine + hexadecanoyl-CoA = 1-acyl-2-hexadecanoyl-sn-glycero-3-phosphocholine + CoA</text>
        <dbReference type="Rhea" id="RHEA:37803"/>
        <dbReference type="ChEBI" id="CHEBI:57287"/>
        <dbReference type="ChEBI" id="CHEBI:57379"/>
        <dbReference type="ChEBI" id="CHEBI:58168"/>
        <dbReference type="ChEBI" id="CHEBI:75279"/>
    </reaction>
    <physiologicalReaction direction="left-to-right" evidence="1">
        <dbReference type="Rhea" id="RHEA:37804"/>
    </physiologicalReaction>
</comment>
<comment type="catalytic activity">
    <reaction evidence="1">
        <text>a 1-acyl-sn-glycero-3-phosphate + hexadecanoyl-CoA = 1-acyl-2-hexadecanoyl-sn-glycero-3-phosphate + CoA</text>
        <dbReference type="Rhea" id="RHEA:33315"/>
        <dbReference type="ChEBI" id="CHEBI:57287"/>
        <dbReference type="ChEBI" id="CHEBI:57379"/>
        <dbReference type="ChEBI" id="CHEBI:57970"/>
        <dbReference type="ChEBI" id="CHEBI:64862"/>
    </reaction>
    <physiologicalReaction direction="left-to-right" evidence="1">
        <dbReference type="Rhea" id="RHEA:33316"/>
    </physiologicalReaction>
</comment>
<comment type="catalytic activity">
    <reaction evidence="1">
        <text>1-acyl-sn-glycero-3-phospho-(1'-sn-glycerol) + hexadecanoyl-CoA = 1-acyl-2-hexadecanoyl-sn-glycero-3-phospho-(1'-sn-glycerol) + CoA</text>
        <dbReference type="Rhea" id="RHEA:37807"/>
        <dbReference type="ChEBI" id="CHEBI:57287"/>
        <dbReference type="ChEBI" id="CHEBI:57379"/>
        <dbReference type="ChEBI" id="CHEBI:64840"/>
        <dbReference type="ChEBI" id="CHEBI:75280"/>
    </reaction>
    <physiologicalReaction direction="left-to-right" evidence="1">
        <dbReference type="Rhea" id="RHEA:37808"/>
    </physiologicalReaction>
</comment>
<comment type="biophysicochemical properties">
    <kinetics>
        <KM evidence="6">0.6 uM for palmitoyl-CoA (in the presence of 1-palmitoyl-LPC as cosubstrate)</KM>
        <KM evidence="6">4 uM for oleoyl-CoA (in the presence of 1-palmitoyl-LPC as cosubstrate)</KM>
        <KM evidence="6">7.8 uM for linoleoyl-CoA (in the presence of 1-palmitoyl-LPC as cosubstrate)</KM>
        <KM evidence="6">4.3 uM for arachidonyl-CoA (in the presence of 1-palmitoyl-LPC as cosubstrate)</KM>
        <KM evidence="6">6.8 uM for 1-palmitoyl-LPC (in the presence of palmitoyl-CoA as cosubstrate)</KM>
        <KM evidence="6">27 uM for 1-palmitoyl-LPC (in the presence of oleoyl-CoA as cosubstrate)</KM>
        <KM evidence="6">44.5 uM for 1-palmitoyl-LPC (in the presence of linoleoyl-CoA as cosubstrate)</KM>
        <KM evidence="6">9.2 uM for 1-palmitoyl-LPC (in the presence of arachidonyl-CoA as cosubstrate)</KM>
        <Vmax evidence="6">2.8 nmol/min/mg enzyme towards palmitoyl-CoA using 1-palmitoyl-LPC as cosubstrate</Vmax>
        <Vmax evidence="6">5.6 nmol/min/mg enzyme towards oleoyl-CoA using 1-palmitoyl-LPC as cosubstrate</Vmax>
        <Vmax evidence="6">11.3 nmol/min/mg enzyme towards linoleoyl-CoA using 1-palmitoyl-LPC as cosubstrate</Vmax>
        <Vmax evidence="6">4.6 nmol/min/mg enzyme towards arachidonyl-CoA using 1-palmitoyl-LPC as cosubstrate</Vmax>
        <Vmax evidence="6">1.4 nmol/min/mg enzyme towards 1-palmitoyl-LPC using palmitoyl-CoA as cosubstrate</Vmax>
        <Vmax evidence="6">6.8 nmol/min/mg enzyme towards 1-palmitoyl-LPC using oleoyl-CoA as cosubstrate</Vmax>
        <Vmax evidence="6">11.8 nmol/min/mg enzyme towards 1-palmitoyl-LPC using linoleoyl-CoA as cosubstrate</Vmax>
        <Vmax evidence="6">3.6 nmol/min/mg enzyme with towards 1-palmitoyl-LPC using arachidonyl-CoA as cosubstrate</Vmax>
    </kinetics>
    <phDependence>
        <text evidence="6">Optimum pH is 5.5 and 7.5.</text>
    </phDependence>
</comment>
<comment type="pathway">
    <text evidence="7">Lipid metabolism; phospholipid metabolism.</text>
</comment>
<comment type="subcellular location">
    <subcellularLocation>
        <location evidence="7">Endoplasmic reticulum membrane</location>
        <topology evidence="7">Single-pass type II membrane protein</topology>
    </subcellularLocation>
    <subcellularLocation>
        <location evidence="2">Golgi apparatus membrane</location>
        <topology evidence="11">Single-pass type II membrane protein</topology>
    </subcellularLocation>
    <subcellularLocation>
        <location evidence="10">Cell membrane</location>
        <topology evidence="11">Single-pass type II membrane protein</topology>
    </subcellularLocation>
    <subcellularLocation>
        <location evidence="7">Lipid droplet</location>
    </subcellularLocation>
    <text evidence="7">May adopt a monotopic topology when embedded in the lipid monolayer of the lipid droplet, with both termini exposed to the cytoplasm.</text>
</comment>
<comment type="tissue specificity">
    <text evidence="6">Erythrocytes.</text>
</comment>
<comment type="domain">
    <text evidence="2">The HXXXXD motif is essential for acyltransferase activity and may constitute the binding site for the phosphate moiety of the glycerol-3-phosphocholine.</text>
</comment>
<comment type="domain">
    <text evidence="2">The di-lysine motif may confer endoplasmic reticulum localization.</text>
</comment>
<comment type="similarity">
    <text evidence="9">Belongs to the 1-acyl-sn-glycerol-3-phosphate acyltransferase family.</text>
</comment>
<comment type="sequence caution" evidence="9">
    <conflict type="erroneous initiation">
        <sequence resource="EMBL-CDS" id="BAB14061"/>
    </conflict>
    <text>Truncated N-terminus.</text>
</comment>
<comment type="sequence caution" evidence="9">
    <conflict type="erroneous initiation">
        <sequence resource="EMBL-CDS" id="BAB14065"/>
    </conflict>
    <text>Truncated N-terminus.</text>
</comment>
<name>PCAT1_HUMAN</name>
<sequence length="534" mass="59151">MRLRGCGPRAAPASSAGASDARLLAPPGRNPFVHELRLSALQKAQVALMTLTLFPVRLLVAAAMMLLAWPLALVASLGSAEKEPEQPPALWRKVVDFLLKAIMRTMWFAGGFHRVAVKGRQALPTEAAILTLAPHSSYFDAIPVTMTMSSIVMKAESRDIPIWGTLIQYIRPVFVSRSDQDSRRKTVEEIKRRAQSNGKWPQIMIFPEGTCTNRTCLITFKPGAFIPGAPVQPVVLRYPNKLDTITWTWQGPGALEILWLTLCQFHNQVEIEFLPVYSPSEEEKRNPALYASNVRRVMAEALGVSVTDYTFEDCQLALAEGQLRLPADTCLLEFARLVRGLGLKPEKLEKDLDRYSERARMKGGEKIGIAEFAASLEVPVSDLLEDMFSLFDESGSGEVDLRECVVALSVVCRPARTLDTIQLAFKMYGAQEDGSVGEGDLSCILKTALGVAELTVTDLFRAIDQEEKGKITFADFHRFAEMYPAFAEEYLYPDQTHFESCAETSPAPIPNGFCADFSPENSDAGRKPVRKKLD</sequence>
<proteinExistence type="evidence at protein level"/>
<gene>
    <name type="primary">LPCAT1</name>
    <name type="synonym">AYTL2</name>
    <name type="synonym">PFAAP3</name>
</gene>
<keyword id="KW-0012">Acyltransferase</keyword>
<keyword id="KW-0106">Calcium</keyword>
<keyword id="KW-1003">Cell membrane</keyword>
<keyword id="KW-0256">Endoplasmic reticulum</keyword>
<keyword id="KW-0333">Golgi apparatus</keyword>
<keyword id="KW-0444">Lipid biosynthesis</keyword>
<keyword id="KW-0551">Lipid droplet</keyword>
<keyword id="KW-0443">Lipid metabolism</keyword>
<keyword id="KW-0472">Membrane</keyword>
<keyword id="KW-0479">Metal-binding</keyword>
<keyword id="KW-0594">Phospholipid biosynthesis</keyword>
<keyword id="KW-1208">Phospholipid metabolism</keyword>
<keyword id="KW-1267">Proteomics identification</keyword>
<keyword id="KW-1185">Reference proteome</keyword>
<keyword id="KW-0677">Repeat</keyword>
<keyword id="KW-0735">Signal-anchor</keyword>
<keyword id="KW-0808">Transferase</keyword>
<keyword id="KW-0812">Transmembrane</keyword>
<keyword id="KW-1133">Transmembrane helix</keyword>
<organism>
    <name type="scientific">Homo sapiens</name>
    <name type="common">Human</name>
    <dbReference type="NCBI Taxonomy" id="9606"/>
    <lineage>
        <taxon>Eukaryota</taxon>
        <taxon>Metazoa</taxon>
        <taxon>Chordata</taxon>
        <taxon>Craniata</taxon>
        <taxon>Vertebrata</taxon>
        <taxon>Euteleostomi</taxon>
        <taxon>Mammalia</taxon>
        <taxon>Eutheria</taxon>
        <taxon>Euarchontoglires</taxon>
        <taxon>Primates</taxon>
        <taxon>Haplorrhini</taxon>
        <taxon>Catarrhini</taxon>
        <taxon>Hominidae</taxon>
        <taxon>Homo</taxon>
    </lineage>
</organism>
<dbReference type="EC" id="2.3.1.23" evidence="6 7"/>
<dbReference type="EC" id="2.3.1.51" evidence="1"/>
<dbReference type="EC" id="2.3.1.25" evidence="2"/>
<dbReference type="EC" id="2.3.1.67" evidence="2"/>
<dbReference type="EMBL" id="AB244719">
    <property type="protein sequence ID" value="BAE94688.1"/>
    <property type="molecule type" value="mRNA"/>
</dbReference>
<dbReference type="EMBL" id="AK090444">
    <property type="protein sequence ID" value="BAC03425.1"/>
    <property type="molecule type" value="mRNA"/>
</dbReference>
<dbReference type="EMBL" id="BC020166">
    <property type="protein sequence ID" value="AAH20166.3"/>
    <property type="molecule type" value="mRNA"/>
</dbReference>
<dbReference type="EMBL" id="AK022505">
    <property type="protein sequence ID" value="BAB14065.1"/>
    <property type="status" value="ALT_INIT"/>
    <property type="molecule type" value="mRNA"/>
</dbReference>
<dbReference type="EMBL" id="AK022499">
    <property type="protein sequence ID" value="BAB14061.1"/>
    <property type="status" value="ALT_INIT"/>
    <property type="molecule type" value="mRNA"/>
</dbReference>
<dbReference type="EMBL" id="AF530061">
    <property type="protein sequence ID" value="AAQ09945.1"/>
    <property type="molecule type" value="mRNA"/>
</dbReference>
<dbReference type="EMBL" id="AL831864">
    <property type="protein sequence ID" value="CAD38556.1"/>
    <property type="molecule type" value="mRNA"/>
</dbReference>
<dbReference type="CCDS" id="CCDS3864.1"/>
<dbReference type="RefSeq" id="NP_079106.3">
    <property type="nucleotide sequence ID" value="NM_024830.4"/>
</dbReference>
<dbReference type="SMR" id="Q8NF37"/>
<dbReference type="BioGRID" id="122973">
    <property type="interactions" value="143"/>
</dbReference>
<dbReference type="FunCoup" id="Q8NF37">
    <property type="interactions" value="1584"/>
</dbReference>
<dbReference type="IntAct" id="Q8NF37">
    <property type="interactions" value="53"/>
</dbReference>
<dbReference type="MINT" id="Q8NF37"/>
<dbReference type="STRING" id="9606.ENSP00000283415"/>
<dbReference type="ChEMBL" id="CHEMBL4295903"/>
<dbReference type="DrugBank" id="DB15584">
    <property type="generic name" value="Luteolin"/>
</dbReference>
<dbReference type="DrugBank" id="DB04216">
    <property type="generic name" value="Quercetin"/>
</dbReference>
<dbReference type="SwissLipids" id="SLP:000000295"/>
<dbReference type="GlyCosmos" id="Q8NF37">
    <property type="glycosylation" value="2 sites, 1 glycan"/>
</dbReference>
<dbReference type="GlyGen" id="Q8NF37">
    <property type="glycosylation" value="2 sites, 1 O-linked glycan (2 sites)"/>
</dbReference>
<dbReference type="iPTMnet" id="Q8NF37"/>
<dbReference type="PhosphoSitePlus" id="Q8NF37"/>
<dbReference type="SwissPalm" id="Q8NF37"/>
<dbReference type="BioMuta" id="LPCAT1"/>
<dbReference type="DMDM" id="110815902"/>
<dbReference type="jPOST" id="Q8NF37"/>
<dbReference type="MassIVE" id="Q8NF37"/>
<dbReference type="PaxDb" id="9606-ENSP00000283415"/>
<dbReference type="PeptideAtlas" id="Q8NF37"/>
<dbReference type="ProteomicsDB" id="73259"/>
<dbReference type="Pumba" id="Q8NF37"/>
<dbReference type="TopDownProteomics" id="Q8NF37"/>
<dbReference type="Antibodypedia" id="1587">
    <property type="antibodies" value="220 antibodies from 28 providers"/>
</dbReference>
<dbReference type="DNASU" id="79888"/>
<dbReference type="Ensembl" id="ENST00000283415.4">
    <property type="protein sequence ID" value="ENSP00000283415.3"/>
    <property type="gene ID" value="ENSG00000153395.11"/>
</dbReference>
<dbReference type="Ensembl" id="ENST00000475622.6">
    <property type="protein sequence ID" value="ENSP00000423472.1"/>
    <property type="gene ID" value="ENSG00000153395.11"/>
</dbReference>
<dbReference type="GeneID" id="79888"/>
<dbReference type="KEGG" id="hsa:79888"/>
<dbReference type="MANE-Select" id="ENST00000283415.4">
    <property type="protein sequence ID" value="ENSP00000283415.3"/>
    <property type="RefSeq nucleotide sequence ID" value="NM_024830.5"/>
    <property type="RefSeq protein sequence ID" value="NP_079106.3"/>
</dbReference>
<dbReference type="UCSC" id="uc003jcm.4">
    <property type="organism name" value="human"/>
</dbReference>
<dbReference type="AGR" id="HGNC:25718"/>
<dbReference type="CTD" id="79888"/>
<dbReference type="DisGeNET" id="79888"/>
<dbReference type="GeneCards" id="LPCAT1"/>
<dbReference type="HGNC" id="HGNC:25718">
    <property type="gene designation" value="LPCAT1"/>
</dbReference>
<dbReference type="HPA" id="ENSG00000153395">
    <property type="expression patterns" value="Tissue enhanced (lung, lymphoid tissue)"/>
</dbReference>
<dbReference type="MIM" id="610472">
    <property type="type" value="gene"/>
</dbReference>
<dbReference type="neXtProt" id="NX_Q8NF37"/>
<dbReference type="OpenTargets" id="ENSG00000153395"/>
<dbReference type="PharmGKB" id="PA162394232"/>
<dbReference type="VEuPathDB" id="HostDB:ENSG00000153395"/>
<dbReference type="eggNOG" id="KOG2898">
    <property type="taxonomic scope" value="Eukaryota"/>
</dbReference>
<dbReference type="eggNOG" id="KOG4666">
    <property type="taxonomic scope" value="Eukaryota"/>
</dbReference>
<dbReference type="GeneTree" id="ENSGT01030000234574"/>
<dbReference type="HOGENOM" id="CLU_025017_0_1_1"/>
<dbReference type="InParanoid" id="Q8NF37"/>
<dbReference type="OMA" id="TEDDLAC"/>
<dbReference type="OrthoDB" id="272512at2759"/>
<dbReference type="PAN-GO" id="Q8NF37">
    <property type="GO annotations" value="0 GO annotations based on evolutionary models"/>
</dbReference>
<dbReference type="PhylomeDB" id="Q8NF37"/>
<dbReference type="TreeFam" id="TF323244"/>
<dbReference type="BRENDA" id="2.3.1.23">
    <property type="organism ID" value="2681"/>
</dbReference>
<dbReference type="BRENDA" id="2.3.1.51">
    <property type="organism ID" value="2681"/>
</dbReference>
<dbReference type="BRENDA" id="2.3.1.62">
    <property type="organism ID" value="2681"/>
</dbReference>
<dbReference type="PathwayCommons" id="Q8NF37"/>
<dbReference type="Reactome" id="R-HSA-1482788">
    <property type="pathway name" value="Acyl chain remodelling of PC"/>
</dbReference>
<dbReference type="Reactome" id="R-HSA-1482925">
    <property type="pathway name" value="Acyl chain remodelling of PG"/>
</dbReference>
<dbReference type="Reactome" id="R-HSA-1483166">
    <property type="pathway name" value="Synthesis of PA"/>
</dbReference>
<dbReference type="Reactome" id="R-HSA-1483191">
    <property type="pathway name" value="Synthesis of PC"/>
</dbReference>
<dbReference type="Reactome" id="R-HSA-6798695">
    <property type="pathway name" value="Neutrophil degranulation"/>
</dbReference>
<dbReference type="SignaLink" id="Q8NF37"/>
<dbReference type="SIGNOR" id="Q8NF37"/>
<dbReference type="UniPathway" id="UPA00085"/>
<dbReference type="BioGRID-ORCS" id="79888">
    <property type="hits" value="23 hits in 1163 CRISPR screens"/>
</dbReference>
<dbReference type="ChiTaRS" id="LPCAT1">
    <property type="organism name" value="human"/>
</dbReference>
<dbReference type="GenomeRNAi" id="79888"/>
<dbReference type="Pharos" id="Q8NF37">
    <property type="development level" value="Tbio"/>
</dbReference>
<dbReference type="PRO" id="PR:Q8NF37"/>
<dbReference type="Proteomes" id="UP000005640">
    <property type="component" value="Chromosome 5"/>
</dbReference>
<dbReference type="RNAct" id="Q8NF37">
    <property type="molecule type" value="protein"/>
</dbReference>
<dbReference type="Bgee" id="ENSG00000153395">
    <property type="expression patterns" value="Expressed in upper lobe of left lung and 93 other cell types or tissues"/>
</dbReference>
<dbReference type="GO" id="GO:0035577">
    <property type="term" value="C:azurophil granule membrane"/>
    <property type="evidence" value="ECO:0000304"/>
    <property type="project" value="Reactome"/>
</dbReference>
<dbReference type="GO" id="GO:0005783">
    <property type="term" value="C:endoplasmic reticulum"/>
    <property type="evidence" value="ECO:0000314"/>
    <property type="project" value="UniProtKB"/>
</dbReference>
<dbReference type="GO" id="GO:0005789">
    <property type="term" value="C:endoplasmic reticulum membrane"/>
    <property type="evidence" value="ECO:0000304"/>
    <property type="project" value="Reactome"/>
</dbReference>
<dbReference type="GO" id="GO:0005794">
    <property type="term" value="C:Golgi apparatus"/>
    <property type="evidence" value="ECO:0000250"/>
    <property type="project" value="UniProtKB"/>
</dbReference>
<dbReference type="GO" id="GO:0000139">
    <property type="term" value="C:Golgi membrane"/>
    <property type="evidence" value="ECO:0007669"/>
    <property type="project" value="UniProtKB-SubCell"/>
</dbReference>
<dbReference type="GO" id="GO:0005811">
    <property type="term" value="C:lipid droplet"/>
    <property type="evidence" value="ECO:0000314"/>
    <property type="project" value="UniProtKB"/>
</dbReference>
<dbReference type="GO" id="GO:0016020">
    <property type="term" value="C:membrane"/>
    <property type="evidence" value="ECO:0007005"/>
    <property type="project" value="UniProtKB"/>
</dbReference>
<dbReference type="GO" id="GO:0005886">
    <property type="term" value="C:plasma membrane"/>
    <property type="evidence" value="ECO:0000304"/>
    <property type="project" value="Reactome"/>
</dbReference>
<dbReference type="GO" id="GO:0003841">
    <property type="term" value="F:1-acylglycerol-3-phosphate O-acyltransferase activity"/>
    <property type="evidence" value="ECO:0000250"/>
    <property type="project" value="UniProtKB"/>
</dbReference>
<dbReference type="GO" id="GO:0047184">
    <property type="term" value="F:1-acylglycerophosphocholine O-acyltransferase activity"/>
    <property type="evidence" value="ECO:0000314"/>
    <property type="project" value="UniProtKB"/>
</dbReference>
<dbReference type="GO" id="GO:0047192">
    <property type="term" value="F:1-alkylglycerophosphocholine O-acetyltransferase activity"/>
    <property type="evidence" value="ECO:0000250"/>
    <property type="project" value="UniProtKB"/>
</dbReference>
<dbReference type="GO" id="GO:0047191">
    <property type="term" value="F:1-alkylglycerophosphocholine O-acyltransferase activity"/>
    <property type="evidence" value="ECO:0007669"/>
    <property type="project" value="Ensembl"/>
</dbReference>
<dbReference type="GO" id="GO:0047144">
    <property type="term" value="F:2-acylglycerol-3-phosphate O-acyltransferase activity"/>
    <property type="evidence" value="ECO:0000304"/>
    <property type="project" value="Reactome"/>
</dbReference>
<dbReference type="GO" id="GO:0005509">
    <property type="term" value="F:calcium ion binding"/>
    <property type="evidence" value="ECO:0007669"/>
    <property type="project" value="InterPro"/>
</dbReference>
<dbReference type="GO" id="GO:0042171">
    <property type="term" value="F:lysophosphatidic acid acyltransferase activity"/>
    <property type="evidence" value="ECO:0000318"/>
    <property type="project" value="GO_Central"/>
</dbReference>
<dbReference type="GO" id="GO:0047159">
    <property type="term" value="F:plasmalogen synthase activity"/>
    <property type="evidence" value="ECO:0000250"/>
    <property type="project" value="UniProtKB"/>
</dbReference>
<dbReference type="GO" id="GO:2001246">
    <property type="term" value="P:negative regulation of phosphatidylcholine biosynthetic process"/>
    <property type="evidence" value="ECO:0007669"/>
    <property type="project" value="Ensembl"/>
</dbReference>
<dbReference type="GO" id="GO:0006654">
    <property type="term" value="P:phosphatidic acid biosynthetic process"/>
    <property type="evidence" value="ECO:0000304"/>
    <property type="project" value="Reactome"/>
</dbReference>
<dbReference type="GO" id="GO:0036151">
    <property type="term" value="P:phosphatidylcholine acyl-chain remodeling"/>
    <property type="evidence" value="ECO:0000314"/>
    <property type="project" value="UniProtKB"/>
</dbReference>
<dbReference type="GO" id="GO:0006656">
    <property type="term" value="P:phosphatidylcholine biosynthetic process"/>
    <property type="evidence" value="ECO:0007669"/>
    <property type="project" value="Ensembl"/>
</dbReference>
<dbReference type="GO" id="GO:0036148">
    <property type="term" value="P:phosphatidylglycerol acyl-chain remodeling"/>
    <property type="evidence" value="ECO:0000304"/>
    <property type="project" value="Reactome"/>
</dbReference>
<dbReference type="GO" id="GO:0008654">
    <property type="term" value="P:phospholipid biosynthetic process"/>
    <property type="evidence" value="ECO:0000250"/>
    <property type="project" value="UniProtKB"/>
</dbReference>
<dbReference type="GO" id="GO:0045732">
    <property type="term" value="P:positive regulation of protein catabolic process"/>
    <property type="evidence" value="ECO:0007669"/>
    <property type="project" value="Ensembl"/>
</dbReference>
<dbReference type="GO" id="GO:0030163">
    <property type="term" value="P:protein catabolic process"/>
    <property type="evidence" value="ECO:0007669"/>
    <property type="project" value="Ensembl"/>
</dbReference>
<dbReference type="GO" id="GO:0060041">
    <property type="term" value="P:retina development in camera-type eye"/>
    <property type="evidence" value="ECO:0007669"/>
    <property type="project" value="Ensembl"/>
</dbReference>
<dbReference type="GO" id="GO:0043129">
    <property type="term" value="P:surfactant homeostasis"/>
    <property type="evidence" value="ECO:0007669"/>
    <property type="project" value="Ensembl"/>
</dbReference>
<dbReference type="CDD" id="cd07991">
    <property type="entry name" value="LPLAT_LPCAT1-like"/>
    <property type="match status" value="1"/>
</dbReference>
<dbReference type="FunFam" id="1.10.238.10:FF:000379">
    <property type="entry name" value="Lysophosphatidylcholine acyltransferase 1"/>
    <property type="match status" value="1"/>
</dbReference>
<dbReference type="Gene3D" id="1.10.238.10">
    <property type="entry name" value="EF-hand"/>
    <property type="match status" value="1"/>
</dbReference>
<dbReference type="InterPro" id="IPR011992">
    <property type="entry name" value="EF-hand-dom_pair"/>
</dbReference>
<dbReference type="InterPro" id="IPR002048">
    <property type="entry name" value="EF_hand_dom"/>
</dbReference>
<dbReference type="InterPro" id="IPR045252">
    <property type="entry name" value="LPCAT1-like"/>
</dbReference>
<dbReference type="InterPro" id="IPR002123">
    <property type="entry name" value="Plipid/glycerol_acylTrfase"/>
</dbReference>
<dbReference type="PANTHER" id="PTHR23063:SF57">
    <property type="entry name" value="LYSOPHOSPHATIDYLCHOLINE ACYLTRANSFERASE 1"/>
    <property type="match status" value="1"/>
</dbReference>
<dbReference type="PANTHER" id="PTHR23063">
    <property type="entry name" value="PHOSPHOLIPID ACYLTRANSFERASE"/>
    <property type="match status" value="1"/>
</dbReference>
<dbReference type="Pfam" id="PF01553">
    <property type="entry name" value="Acyltransferase"/>
    <property type="match status" value="1"/>
</dbReference>
<dbReference type="Pfam" id="PF13833">
    <property type="entry name" value="EF-hand_8"/>
    <property type="match status" value="1"/>
</dbReference>
<dbReference type="SMART" id="SM00054">
    <property type="entry name" value="EFh"/>
    <property type="match status" value="2"/>
</dbReference>
<dbReference type="SMART" id="SM00563">
    <property type="entry name" value="PlsC"/>
    <property type="match status" value="1"/>
</dbReference>
<dbReference type="SUPFAM" id="SSF47473">
    <property type="entry name" value="EF-hand"/>
    <property type="match status" value="1"/>
</dbReference>
<dbReference type="SUPFAM" id="SSF69593">
    <property type="entry name" value="Glycerol-3-phosphate (1)-acyltransferase"/>
    <property type="match status" value="1"/>
</dbReference>
<dbReference type="PROSITE" id="PS50222">
    <property type="entry name" value="EF_HAND_2"/>
    <property type="match status" value="2"/>
</dbReference>
<protein>
    <recommendedName>
        <fullName>Lysophosphatidylcholine acyltransferase 1</fullName>
        <shortName>LPC acyltransferase 1</shortName>
        <shortName>LPCAT-1</shortName>
        <shortName>LysoPC acyltransferase 1</shortName>
        <ecNumber evidence="6 7">2.3.1.23</ecNumber>
    </recommendedName>
    <alternativeName>
        <fullName>1-acylglycerol-3-phosphate O-acyltransferase</fullName>
        <ecNumber evidence="1">2.3.1.51</ecNumber>
    </alternativeName>
    <alternativeName>
        <fullName>1-acylglycerophosphocholine O-acyltransferase</fullName>
    </alternativeName>
    <alternativeName>
        <fullName>1-alkenylglycerophosphocholine O-acyltransferase</fullName>
        <ecNumber evidence="2">2.3.1.25</ecNumber>
    </alternativeName>
    <alternativeName>
        <fullName>1-alkylglycerophosphocholine O-acetyltransferase</fullName>
        <ecNumber evidence="2">2.3.1.67</ecNumber>
    </alternativeName>
    <alternativeName>
        <fullName>Acetyl-CoA:lyso-platelet-activating factor acetyltransferase</fullName>
        <shortName>Acetyl-CoA:lyso-PAF acetyltransferase</shortName>
        <shortName>Lyso-PAF acetyltransferase</shortName>
        <shortName>LysoPAFAT</shortName>
    </alternativeName>
    <alternativeName>
        <fullName>Acyltransferase-like 2</fullName>
    </alternativeName>
    <alternativeName>
        <fullName>Phosphonoformate immuno-associated protein 3</fullName>
    </alternativeName>
</protein>
<feature type="chain" id="PRO_0000247064" description="Lysophosphatidylcholine acyltransferase 1">
    <location>
        <begin position="1"/>
        <end position="534"/>
    </location>
</feature>
<feature type="topological domain" description="Cytoplasmic" evidence="3">
    <location>
        <begin position="1"/>
        <end position="57"/>
    </location>
</feature>
<feature type="transmembrane region" description="Helical; Signal-anchor for type II membrane protein" evidence="3">
    <location>
        <begin position="58"/>
        <end position="78"/>
    </location>
</feature>
<feature type="topological domain" description="Lumenal" evidence="3">
    <location>
        <begin position="79"/>
        <end position="534"/>
    </location>
</feature>
<feature type="domain" description="EF-hand 1" evidence="4">
    <location>
        <begin position="379"/>
        <end position="414"/>
    </location>
</feature>
<feature type="domain" description="EF-hand 2" evidence="4">
    <location>
        <begin position="451"/>
        <end position="486"/>
    </location>
</feature>
<feature type="region of interest" description="Disordered" evidence="5">
    <location>
        <begin position="1"/>
        <end position="22"/>
    </location>
</feature>
<feature type="region of interest" description="Disordered" evidence="5">
    <location>
        <begin position="512"/>
        <end position="534"/>
    </location>
</feature>
<feature type="short sequence motif" description="HXXXXD motif" evidence="2">
    <location>
        <begin position="135"/>
        <end position="140"/>
    </location>
</feature>
<feature type="short sequence motif" description="Di-lysine motif" evidence="11">
    <location>
        <begin position="531"/>
        <end position="534"/>
    </location>
</feature>
<feature type="compositionally biased region" description="Low complexity" evidence="5">
    <location>
        <begin position="7"/>
        <end position="22"/>
    </location>
</feature>
<feature type="compositionally biased region" description="Basic and acidic residues" evidence="5">
    <location>
        <begin position="523"/>
        <end position="534"/>
    </location>
</feature>
<feature type="binding site" evidence="9">
    <location>
        <position position="392"/>
    </location>
    <ligand>
        <name>Ca(2+)</name>
        <dbReference type="ChEBI" id="CHEBI:29108"/>
    </ligand>
</feature>
<feature type="binding site" evidence="9">
    <location>
        <position position="394"/>
    </location>
    <ligand>
        <name>Ca(2+)</name>
        <dbReference type="ChEBI" id="CHEBI:29108"/>
    </ligand>
</feature>
<feature type="binding site" evidence="9">
    <location>
        <position position="396"/>
    </location>
    <ligand>
        <name>Ca(2+)</name>
        <dbReference type="ChEBI" id="CHEBI:29108"/>
    </ligand>
</feature>
<feature type="binding site" evidence="9">
    <location>
        <position position="398"/>
    </location>
    <ligand>
        <name>Ca(2+)</name>
        <dbReference type="ChEBI" id="CHEBI:29108"/>
    </ligand>
</feature>
<feature type="binding site" evidence="9">
    <location>
        <position position="403"/>
    </location>
    <ligand>
        <name>Ca(2+)</name>
        <dbReference type="ChEBI" id="CHEBI:29108"/>
    </ligand>
</feature>
<evidence type="ECO:0000250" key="1">
    <source>
        <dbReference type="UniProtKB" id="Q1HAQ0"/>
    </source>
</evidence>
<evidence type="ECO:0000250" key="2">
    <source>
        <dbReference type="UniProtKB" id="Q3TFD2"/>
    </source>
</evidence>
<evidence type="ECO:0000255" key="3"/>
<evidence type="ECO:0000255" key="4">
    <source>
        <dbReference type="PROSITE-ProRule" id="PRU00448"/>
    </source>
</evidence>
<evidence type="ECO:0000256" key="5">
    <source>
        <dbReference type="SAM" id="MobiDB-lite"/>
    </source>
</evidence>
<evidence type="ECO:0000269" key="6">
    <source>
    </source>
</evidence>
<evidence type="ECO:0000269" key="7">
    <source>
    </source>
</evidence>
<evidence type="ECO:0000269" key="8">
    <source>
    </source>
</evidence>
<evidence type="ECO:0000305" key="9"/>
<evidence type="ECO:0000305" key="10">
    <source>
    </source>
</evidence>
<evidence type="ECO:0000305" key="11">
    <source>
    </source>
</evidence>